<evidence type="ECO:0000255" key="1">
    <source>
        <dbReference type="HAMAP-Rule" id="MF_01366"/>
    </source>
</evidence>
<evidence type="ECO:0000305" key="2"/>
<accession>B0K5S7</accession>
<feature type="chain" id="PRO_1000144191" description="Large ribosomal subunit protein uL13">
    <location>
        <begin position="1"/>
        <end position="143"/>
    </location>
</feature>
<organism>
    <name type="scientific">Thermoanaerobacter sp. (strain X514)</name>
    <dbReference type="NCBI Taxonomy" id="399726"/>
    <lineage>
        <taxon>Bacteria</taxon>
        <taxon>Bacillati</taxon>
        <taxon>Bacillota</taxon>
        <taxon>Clostridia</taxon>
        <taxon>Thermoanaerobacterales</taxon>
        <taxon>Thermoanaerobacteraceae</taxon>
        <taxon>Thermoanaerobacter</taxon>
    </lineage>
</organism>
<dbReference type="EMBL" id="CP000923">
    <property type="protein sequence ID" value="ABY92203.1"/>
    <property type="molecule type" value="Genomic_DNA"/>
</dbReference>
<dbReference type="RefSeq" id="WP_003868593.1">
    <property type="nucleotide sequence ID" value="NC_010320.1"/>
</dbReference>
<dbReference type="SMR" id="B0K5S7"/>
<dbReference type="KEGG" id="tex:Teth514_0901"/>
<dbReference type="HOGENOM" id="CLU_082184_2_2_9"/>
<dbReference type="Proteomes" id="UP000002155">
    <property type="component" value="Chromosome"/>
</dbReference>
<dbReference type="GO" id="GO:0022625">
    <property type="term" value="C:cytosolic large ribosomal subunit"/>
    <property type="evidence" value="ECO:0007669"/>
    <property type="project" value="TreeGrafter"/>
</dbReference>
<dbReference type="GO" id="GO:0003729">
    <property type="term" value="F:mRNA binding"/>
    <property type="evidence" value="ECO:0007669"/>
    <property type="project" value="TreeGrafter"/>
</dbReference>
<dbReference type="GO" id="GO:0003735">
    <property type="term" value="F:structural constituent of ribosome"/>
    <property type="evidence" value="ECO:0007669"/>
    <property type="project" value="InterPro"/>
</dbReference>
<dbReference type="GO" id="GO:0017148">
    <property type="term" value="P:negative regulation of translation"/>
    <property type="evidence" value="ECO:0007669"/>
    <property type="project" value="TreeGrafter"/>
</dbReference>
<dbReference type="GO" id="GO:0006412">
    <property type="term" value="P:translation"/>
    <property type="evidence" value="ECO:0007669"/>
    <property type="project" value="UniProtKB-UniRule"/>
</dbReference>
<dbReference type="CDD" id="cd00392">
    <property type="entry name" value="Ribosomal_L13"/>
    <property type="match status" value="1"/>
</dbReference>
<dbReference type="FunFam" id="3.90.1180.10:FF:000001">
    <property type="entry name" value="50S ribosomal protein L13"/>
    <property type="match status" value="1"/>
</dbReference>
<dbReference type="Gene3D" id="3.90.1180.10">
    <property type="entry name" value="Ribosomal protein L13"/>
    <property type="match status" value="1"/>
</dbReference>
<dbReference type="HAMAP" id="MF_01366">
    <property type="entry name" value="Ribosomal_uL13"/>
    <property type="match status" value="1"/>
</dbReference>
<dbReference type="InterPro" id="IPR005822">
    <property type="entry name" value="Ribosomal_uL13"/>
</dbReference>
<dbReference type="InterPro" id="IPR005823">
    <property type="entry name" value="Ribosomal_uL13_bac-type"/>
</dbReference>
<dbReference type="InterPro" id="IPR023563">
    <property type="entry name" value="Ribosomal_uL13_CS"/>
</dbReference>
<dbReference type="InterPro" id="IPR036899">
    <property type="entry name" value="Ribosomal_uL13_sf"/>
</dbReference>
<dbReference type="NCBIfam" id="TIGR01066">
    <property type="entry name" value="rplM_bact"/>
    <property type="match status" value="1"/>
</dbReference>
<dbReference type="PANTHER" id="PTHR11545:SF2">
    <property type="entry name" value="LARGE RIBOSOMAL SUBUNIT PROTEIN UL13M"/>
    <property type="match status" value="1"/>
</dbReference>
<dbReference type="PANTHER" id="PTHR11545">
    <property type="entry name" value="RIBOSOMAL PROTEIN L13"/>
    <property type="match status" value="1"/>
</dbReference>
<dbReference type="Pfam" id="PF00572">
    <property type="entry name" value="Ribosomal_L13"/>
    <property type="match status" value="1"/>
</dbReference>
<dbReference type="PIRSF" id="PIRSF002181">
    <property type="entry name" value="Ribosomal_L13"/>
    <property type="match status" value="1"/>
</dbReference>
<dbReference type="SUPFAM" id="SSF52161">
    <property type="entry name" value="Ribosomal protein L13"/>
    <property type="match status" value="1"/>
</dbReference>
<dbReference type="PROSITE" id="PS00783">
    <property type="entry name" value="RIBOSOMAL_L13"/>
    <property type="match status" value="1"/>
</dbReference>
<reference key="1">
    <citation type="submission" date="2008-01" db="EMBL/GenBank/DDBJ databases">
        <title>Complete sequence of Thermoanaerobacter sp. X514.</title>
        <authorList>
            <consortium name="US DOE Joint Genome Institute"/>
            <person name="Copeland A."/>
            <person name="Lucas S."/>
            <person name="Lapidus A."/>
            <person name="Barry K."/>
            <person name="Glavina del Rio T."/>
            <person name="Dalin E."/>
            <person name="Tice H."/>
            <person name="Pitluck S."/>
            <person name="Bruce D."/>
            <person name="Goodwin L."/>
            <person name="Saunders E."/>
            <person name="Brettin T."/>
            <person name="Detter J.C."/>
            <person name="Han C."/>
            <person name="Schmutz J."/>
            <person name="Larimer F."/>
            <person name="Land M."/>
            <person name="Hauser L."/>
            <person name="Kyrpides N."/>
            <person name="Kim E."/>
            <person name="Hemme C."/>
            <person name="Fields M.W."/>
            <person name="He Z."/>
            <person name="Zhou J."/>
            <person name="Richardson P."/>
        </authorList>
    </citation>
    <scope>NUCLEOTIDE SEQUENCE [LARGE SCALE GENOMIC DNA]</scope>
    <source>
        <strain>X514</strain>
    </source>
</reference>
<sequence length="143" mass="16668">MKSYMAKPEEVKRKWFVIDAEGKVLGRLASQIAKILMGKHKPTYTPHVDTGDFVIVLNAEKIVLTGNKLEDKYYKYYTGYPGGLKEVQYKKLMQTKPEFVIYHAVKGMLPKNRLGRRMIKRLKVYRGSEHKHQAQKPEKLDIE</sequence>
<gene>
    <name evidence="1" type="primary">rplM</name>
    <name type="ordered locus">Teth514_0901</name>
</gene>
<protein>
    <recommendedName>
        <fullName evidence="1">Large ribosomal subunit protein uL13</fullName>
    </recommendedName>
    <alternativeName>
        <fullName evidence="2">50S ribosomal protein L13</fullName>
    </alternativeName>
</protein>
<comment type="function">
    <text evidence="1">This protein is one of the early assembly proteins of the 50S ribosomal subunit, although it is not seen to bind rRNA by itself. It is important during the early stages of 50S assembly.</text>
</comment>
<comment type="subunit">
    <text evidence="1">Part of the 50S ribosomal subunit.</text>
</comment>
<comment type="similarity">
    <text evidence="1">Belongs to the universal ribosomal protein uL13 family.</text>
</comment>
<name>RL13_THEPX</name>
<keyword id="KW-0687">Ribonucleoprotein</keyword>
<keyword id="KW-0689">Ribosomal protein</keyword>
<proteinExistence type="inferred from homology"/>